<keyword id="KW-0007">Acetylation</keyword>
<keyword id="KW-0106">Calcium</keyword>
<keyword id="KW-1003">Cell membrane</keyword>
<keyword id="KW-0963">Cytoplasm</keyword>
<keyword id="KW-0472">Membrane</keyword>
<keyword id="KW-0479">Metal-binding</keyword>
<keyword id="KW-0597">Phosphoprotein</keyword>
<keyword id="KW-1185">Reference proteome</keyword>
<keyword id="KW-0677">Repeat</keyword>
<accession>P06813</accession>
<name>CPNS1_RABIT</name>
<sequence>MFLVNSFLKGGGGGGGGGGLGGGLGNVLGGLISGAGGGGGGGGGGGGGGAGGGGTAMRILGGVISAISEAAAQYNPEPPPPRTHYSNIEANESEEVRQFRRLFAQLAGDDMEVSATELMNILNKVVTRHPDLKTDGFGLDTCRSMVAVMDSDTTGKLGFEEFKYLWNNIKKWQAIYKQFDVDRSGTICSRELPGAFEAAGFHLNEHLYNMIIRRYSDEAGNMDFDNFISCLVRLDAMFRAFKSLDKDGTGQIQVNIQEWLQLTMYS</sequence>
<evidence type="ECO:0000250" key="1"/>
<evidence type="ECO:0000250" key="2">
    <source>
        <dbReference type="UniProtKB" id="O88456"/>
    </source>
</evidence>
<evidence type="ECO:0000250" key="3">
    <source>
        <dbReference type="UniProtKB" id="P04632"/>
    </source>
</evidence>
<evidence type="ECO:0000250" key="4">
    <source>
        <dbReference type="UniProtKB" id="Q64537"/>
    </source>
</evidence>
<evidence type="ECO:0000255" key="5">
    <source>
        <dbReference type="PROSITE-ProRule" id="PRU00448"/>
    </source>
</evidence>
<evidence type="ECO:0000269" key="6">
    <source>
    </source>
</evidence>
<evidence type="ECO:0000305" key="7"/>
<gene>
    <name type="primary">CAPNS1</name>
    <name type="synonym">CAPN4</name>
</gene>
<proteinExistence type="evidence at protein level"/>
<protein>
    <recommendedName>
        <fullName>Calpain small subunit 1</fullName>
        <shortName>CSS1</shortName>
    </recommendedName>
    <alternativeName>
        <fullName>Calcium-activated neutral proteinase small subunit</fullName>
        <shortName>CANP small subunit</shortName>
    </alternativeName>
    <alternativeName>
        <fullName>Calcium-dependent protease small subunit</fullName>
        <shortName>CDPS</shortName>
    </alternativeName>
    <alternativeName>
        <fullName>Calcium-dependent protease small subunit 1</fullName>
    </alternativeName>
    <alternativeName>
        <fullName>Calpain regulatory subunit</fullName>
    </alternativeName>
</protein>
<comment type="function">
    <text evidence="2">Regulatory subunit of the calcium-regulated non-lysosomal thiol-protease which catalyzes limited proteolysis of substrates involved in cytoskeletal remodeling and signal transduction. Essential for embryonic development (By similarity).</text>
</comment>
<comment type="subunit">
    <text evidence="1">Homodimer or heterodimer of a large (catalytic) and a small (regulatory) subunit. In presence of calcium, the heterodimer dissociates (By similarity).</text>
</comment>
<comment type="subcellular location">
    <subcellularLocation>
        <location>Cytoplasm</location>
    </subcellularLocation>
    <subcellularLocation>
        <location>Cell membrane</location>
    </subcellularLocation>
    <text evidence="1">Translocates to the plasma membrane upon calcium binding. Allows the formation of the homodimer and also appears to mediate the contact between the large catalytic subunit and small regulatory subunit for the formation of the heterodimer.</text>
</comment>
<comment type="domain">
    <text evidence="1">The contact of the 5th EF-hand domain from each monomer allows the formation of the homodimer and also appears to mediate the contact between the large catalytic subunit and small regulatory subunit for the formation of the heterodimer.</text>
</comment>
<comment type="domain">
    <text evidence="6">EF-hand domains are paired. EF-hand 1 is paired with EF-hand 2 and EF-hand 3 is paired with EF-hand 4. The fifth EF-hand domain, left unpaired, does not bind the calcium but is responsible of the dimerization by EF-embrace. The first four EF-hand domains bind calcium, however it is not sure if the binding of EF-hand 4 to calcium is physiologically relevant.</text>
</comment>
<comment type="PTM">
    <text>The N-terminus is blocked.</text>
</comment>
<feature type="chain" id="PRO_0000073716" description="Calpain small subunit 1">
    <location>
        <begin position="1"/>
        <end position="266"/>
    </location>
</feature>
<feature type="domain" description="EF-hand 1; atypical" evidence="7">
    <location>
        <begin position="94"/>
        <end position="128"/>
    </location>
</feature>
<feature type="domain" description="EF-hand 2" evidence="5">
    <location>
        <begin position="137"/>
        <end position="170"/>
    </location>
</feature>
<feature type="domain" description="EF-hand 3" evidence="5">
    <location>
        <begin position="167"/>
        <end position="202"/>
    </location>
</feature>
<feature type="domain" description="EF-hand 4" evidence="7">
    <location>
        <begin position="203"/>
        <end position="231"/>
    </location>
</feature>
<feature type="domain" description="EF-hand 5" evidence="5">
    <location>
        <begin position="232"/>
        <end position="266"/>
    </location>
</feature>
<feature type="binding site" evidence="4">
    <location>
        <position position="107"/>
    </location>
    <ligand>
        <name>Ca(2+)</name>
        <dbReference type="ChEBI" id="CHEBI:29108"/>
        <label>1</label>
    </ligand>
</feature>
<feature type="binding site" evidence="4">
    <location>
        <position position="110"/>
    </location>
    <ligand>
        <name>Ca(2+)</name>
        <dbReference type="ChEBI" id="CHEBI:29108"/>
        <label>1</label>
    </ligand>
</feature>
<feature type="binding site" evidence="4">
    <location>
        <position position="112"/>
    </location>
    <ligand>
        <name>Ca(2+)</name>
        <dbReference type="ChEBI" id="CHEBI:29108"/>
        <label>1</label>
    </ligand>
</feature>
<feature type="binding site" evidence="4">
    <location>
        <position position="117"/>
    </location>
    <ligand>
        <name>Ca(2+)</name>
        <dbReference type="ChEBI" id="CHEBI:29108"/>
        <label>1</label>
    </ligand>
</feature>
<feature type="binding site" evidence="4">
    <location>
        <position position="135"/>
    </location>
    <ligand>
        <name>Ca(2+)</name>
        <dbReference type="ChEBI" id="CHEBI:29108"/>
        <label>4</label>
    </ligand>
</feature>
<feature type="binding site" evidence="5">
    <location>
        <position position="150"/>
    </location>
    <ligand>
        <name>Ca(2+)</name>
        <dbReference type="ChEBI" id="CHEBI:29108"/>
        <label>2</label>
    </ligand>
</feature>
<feature type="binding site" evidence="5">
    <location>
        <position position="152"/>
    </location>
    <ligand>
        <name>Ca(2+)</name>
        <dbReference type="ChEBI" id="CHEBI:29108"/>
        <label>2</label>
    </ligand>
</feature>
<feature type="binding site" evidence="4 5">
    <location>
        <position position="154"/>
    </location>
    <ligand>
        <name>Ca(2+)</name>
        <dbReference type="ChEBI" id="CHEBI:29108"/>
        <label>2</label>
    </ligand>
</feature>
<feature type="binding site" evidence="4 5">
    <location>
        <position position="156"/>
    </location>
    <ligand>
        <name>Ca(2+)</name>
        <dbReference type="ChEBI" id="CHEBI:29108"/>
        <label>2</label>
    </ligand>
</feature>
<feature type="binding site" evidence="5">
    <location>
        <position position="161"/>
    </location>
    <ligand>
        <name>Ca(2+)</name>
        <dbReference type="ChEBI" id="CHEBI:29108"/>
        <label>2</label>
    </ligand>
</feature>
<feature type="binding site" evidence="5">
    <location>
        <position position="180"/>
    </location>
    <ligand>
        <name>Ca(2+)</name>
        <dbReference type="ChEBI" id="CHEBI:29108"/>
        <label>3</label>
    </ligand>
</feature>
<feature type="binding site" evidence="5">
    <location>
        <position position="182"/>
    </location>
    <ligand>
        <name>Ca(2+)</name>
        <dbReference type="ChEBI" id="CHEBI:29108"/>
        <label>3</label>
    </ligand>
</feature>
<feature type="binding site" evidence="4 5">
    <location>
        <position position="184"/>
    </location>
    <ligand>
        <name>Ca(2+)</name>
        <dbReference type="ChEBI" id="CHEBI:29108"/>
        <label>3</label>
    </ligand>
</feature>
<feature type="binding site" evidence="4 5">
    <location>
        <position position="186"/>
    </location>
    <ligand>
        <name>Ca(2+)</name>
        <dbReference type="ChEBI" id="CHEBI:29108"/>
        <label>3</label>
    </ligand>
</feature>
<feature type="binding site" evidence="5">
    <location>
        <position position="191"/>
    </location>
    <ligand>
        <name>Ca(2+)</name>
        <dbReference type="ChEBI" id="CHEBI:29108"/>
        <label>3</label>
    </ligand>
</feature>
<feature type="binding site" evidence="4">
    <location>
        <position position="223"/>
    </location>
    <ligand>
        <name>Ca(2+)</name>
        <dbReference type="ChEBI" id="CHEBI:29108"/>
        <label>4</label>
    </ligand>
</feature>
<feature type="modified residue" description="N-acetylmethionine" evidence="3">
    <location>
        <position position="1"/>
    </location>
</feature>
<feature type="modified residue" description="Phosphoserine" evidence="3">
    <location>
        <position position="6"/>
    </location>
</feature>
<feature type="modified residue" description="N6-acetyllysine" evidence="3">
    <location>
        <position position="177"/>
    </location>
</feature>
<dbReference type="EMBL" id="M13364">
    <property type="protein sequence ID" value="AAA81565.1"/>
    <property type="molecule type" value="mRNA"/>
</dbReference>
<dbReference type="PIR" id="A24816">
    <property type="entry name" value="CIRBL"/>
</dbReference>
<dbReference type="RefSeq" id="NP_001075733.1">
    <property type="nucleotide sequence ID" value="NM_001082264.1"/>
</dbReference>
<dbReference type="SMR" id="P06813"/>
<dbReference type="FunCoup" id="P06813">
    <property type="interactions" value="577"/>
</dbReference>
<dbReference type="STRING" id="9986.ENSOCUP00000011273"/>
<dbReference type="PaxDb" id="9986-ENSOCUP00000011273"/>
<dbReference type="Ensembl" id="ENSOCUT00000013092.2">
    <property type="protein sequence ID" value="ENSOCUP00000011273.2"/>
    <property type="gene ID" value="ENSOCUG00000013093.4"/>
</dbReference>
<dbReference type="GeneID" id="100009090"/>
<dbReference type="KEGG" id="ocu:100009090"/>
<dbReference type="CTD" id="826"/>
<dbReference type="eggNOG" id="KOG0037">
    <property type="taxonomic scope" value="Eukaryota"/>
</dbReference>
<dbReference type="GeneTree" id="ENSGT00940000155478"/>
<dbReference type="HOGENOM" id="CLU_051357_2_0_1"/>
<dbReference type="InParanoid" id="P06813"/>
<dbReference type="OMA" id="QLYSMIV"/>
<dbReference type="OrthoDB" id="186625at2759"/>
<dbReference type="TreeFam" id="TF314682"/>
<dbReference type="Proteomes" id="UP000001811">
    <property type="component" value="Unplaced"/>
</dbReference>
<dbReference type="Bgee" id="ENSOCUG00000013093">
    <property type="expression patterns" value="Expressed in aorta and 15 other cell types or tissues"/>
</dbReference>
<dbReference type="GO" id="GO:0110158">
    <property type="term" value="C:calpain complex"/>
    <property type="evidence" value="ECO:0007669"/>
    <property type="project" value="Ensembl"/>
</dbReference>
<dbReference type="GO" id="GO:0005829">
    <property type="term" value="C:cytosol"/>
    <property type="evidence" value="ECO:0007669"/>
    <property type="project" value="Ensembl"/>
</dbReference>
<dbReference type="GO" id="GO:0005886">
    <property type="term" value="C:plasma membrane"/>
    <property type="evidence" value="ECO:0007669"/>
    <property type="project" value="UniProtKB-SubCell"/>
</dbReference>
<dbReference type="GO" id="GO:0005509">
    <property type="term" value="F:calcium ion binding"/>
    <property type="evidence" value="ECO:0007669"/>
    <property type="project" value="InterPro"/>
</dbReference>
<dbReference type="GO" id="GO:0004198">
    <property type="term" value="F:calcium-dependent cysteine-type endopeptidase activity"/>
    <property type="evidence" value="ECO:0007669"/>
    <property type="project" value="Ensembl"/>
</dbReference>
<dbReference type="CDD" id="cd16188">
    <property type="entry name" value="EFh_PEF_CPNS1_2"/>
    <property type="match status" value="1"/>
</dbReference>
<dbReference type="FunFam" id="1.10.238.10:FF:000136">
    <property type="entry name" value="Calpain small subunit 1"/>
    <property type="match status" value="1"/>
</dbReference>
<dbReference type="Gene3D" id="1.10.238.10">
    <property type="entry name" value="EF-hand"/>
    <property type="match status" value="1"/>
</dbReference>
<dbReference type="InterPro" id="IPR011992">
    <property type="entry name" value="EF-hand-dom_pair"/>
</dbReference>
<dbReference type="InterPro" id="IPR018247">
    <property type="entry name" value="EF_Hand_1_Ca_BS"/>
</dbReference>
<dbReference type="InterPro" id="IPR002048">
    <property type="entry name" value="EF_hand_dom"/>
</dbReference>
<dbReference type="PANTHER" id="PTHR46735:SF3">
    <property type="entry name" value="CALPAIN SMALL SUBUNIT 1-RELATED"/>
    <property type="match status" value="1"/>
</dbReference>
<dbReference type="PANTHER" id="PTHR46735">
    <property type="entry name" value="CALPAIN, SMALL SUBUNIT 1 A-RELATED"/>
    <property type="match status" value="1"/>
</dbReference>
<dbReference type="SUPFAM" id="SSF47473">
    <property type="entry name" value="EF-hand"/>
    <property type="match status" value="1"/>
</dbReference>
<dbReference type="PROSITE" id="PS00018">
    <property type="entry name" value="EF_HAND_1"/>
    <property type="match status" value="2"/>
</dbReference>
<dbReference type="PROSITE" id="PS50222">
    <property type="entry name" value="EF_HAND_2"/>
    <property type="match status" value="3"/>
</dbReference>
<reference key="1">
    <citation type="journal article" date="1986" name="J. Biol. Chem.">
        <title>Isolation and sequence analysis of cDNA clones for the small subunit of rabbit calcium-dependent protease.</title>
        <authorList>
            <person name="Emori Y."/>
            <person name="Kawasaki H."/>
            <person name="Imajoh S."/>
            <person name="Kawashima S."/>
            <person name="Suzuki K."/>
        </authorList>
    </citation>
    <scope>NUCLEOTIDE SEQUENCE [MRNA]</scope>
</reference>
<reference key="2">
    <citation type="journal article" date="1987" name="J. Biochem.">
        <title>E-F hand structure-domain of calcium-activated neutral protease (CANP) can bind Ca2+ ions.</title>
        <authorList>
            <person name="Minami Y."/>
            <person name="Emori Y."/>
            <person name="Kawasaki H."/>
            <person name="Suzuki K."/>
        </authorList>
    </citation>
    <scope>CALCIUM-BINDING</scope>
    <scope>DOMAIN</scope>
</reference>
<organism>
    <name type="scientific">Oryctolagus cuniculus</name>
    <name type="common">Rabbit</name>
    <dbReference type="NCBI Taxonomy" id="9986"/>
    <lineage>
        <taxon>Eukaryota</taxon>
        <taxon>Metazoa</taxon>
        <taxon>Chordata</taxon>
        <taxon>Craniata</taxon>
        <taxon>Vertebrata</taxon>
        <taxon>Euteleostomi</taxon>
        <taxon>Mammalia</taxon>
        <taxon>Eutheria</taxon>
        <taxon>Euarchontoglires</taxon>
        <taxon>Glires</taxon>
        <taxon>Lagomorpha</taxon>
        <taxon>Leporidae</taxon>
        <taxon>Oryctolagus</taxon>
    </lineage>
</organism>